<evidence type="ECO:0000250" key="1">
    <source>
        <dbReference type="UniProtKB" id="Q8IXP5"/>
    </source>
</evidence>
<evidence type="ECO:0000255" key="2">
    <source>
        <dbReference type="PROSITE-ProRule" id="PRU01347"/>
    </source>
</evidence>
<evidence type="ECO:0000256" key="3">
    <source>
        <dbReference type="SAM" id="MobiDB-lite"/>
    </source>
</evidence>
<evidence type="ECO:0000269" key="4">
    <source>
    </source>
</evidence>
<evidence type="ECO:0000303" key="5">
    <source>
    </source>
</evidence>
<evidence type="ECO:0000305" key="6"/>
<evidence type="ECO:0000312" key="7">
    <source>
        <dbReference type="MGI" id="MGI:1917059"/>
    </source>
</evidence>
<dbReference type="EMBL" id="AK007796">
    <property type="protein sequence ID" value="BAB25262.1"/>
    <property type="molecule type" value="mRNA"/>
</dbReference>
<dbReference type="EMBL" id="AC160052">
    <property type="status" value="NOT_ANNOTATED_CDS"/>
    <property type="molecule type" value="Genomic_DNA"/>
</dbReference>
<dbReference type="EMBL" id="AC122499">
    <property type="status" value="NOT_ANNOTATED_CDS"/>
    <property type="molecule type" value="Genomic_DNA"/>
</dbReference>
<dbReference type="EMBL" id="BC120857">
    <property type="protein sequence ID" value="AAI20858.1"/>
    <property type="molecule type" value="mRNA"/>
</dbReference>
<dbReference type="EMBL" id="BC120859">
    <property type="protein sequence ID" value="AAI20860.1"/>
    <property type="molecule type" value="mRNA"/>
</dbReference>
<dbReference type="CCDS" id="CCDS52792.1">
    <molecule id="Q9D8Q6-2"/>
</dbReference>
<dbReference type="CCDS" id="CCDS90567.1">
    <molecule id="Q9D8Q6-1"/>
</dbReference>
<dbReference type="RefSeq" id="NP_001359483.1">
    <molecule id="Q9D8Q6-1"/>
    <property type="nucleotide sequence ID" value="NM_001372554.1"/>
</dbReference>
<dbReference type="RefSeq" id="NP_001359486.1">
    <molecule id="Q9D8Q6-2"/>
    <property type="nucleotide sequence ID" value="NM_001372557.1"/>
</dbReference>
<dbReference type="RefSeq" id="NP_081493.1">
    <molecule id="Q9D8Q6-2"/>
    <property type="nucleotide sequence ID" value="NM_027217.2"/>
</dbReference>
<dbReference type="RefSeq" id="XP_006510650.1">
    <property type="nucleotide sequence ID" value="XM_006510587.1"/>
</dbReference>
<dbReference type="RefSeq" id="XP_006510651.1">
    <property type="nucleotide sequence ID" value="XM_006510588.3"/>
</dbReference>
<dbReference type="RefSeq" id="XP_006510652.1">
    <molecule id="Q9D8Q6-2"/>
    <property type="nucleotide sequence ID" value="XM_006510589.3"/>
</dbReference>
<dbReference type="FunCoup" id="Q9D8Q6">
    <property type="interactions" value="25"/>
</dbReference>
<dbReference type="IntAct" id="Q9D8Q6">
    <property type="interactions" value="1"/>
</dbReference>
<dbReference type="STRING" id="10090.ENSMUSP00000036912"/>
<dbReference type="GlyGen" id="Q9D8Q6">
    <property type="glycosylation" value="1 site"/>
</dbReference>
<dbReference type="PhosphoSitePlus" id="Q9D8Q6"/>
<dbReference type="PaxDb" id="10090-ENSMUSP00000036912"/>
<dbReference type="Antibodypedia" id="45588">
    <property type="antibodies" value="129 antibodies from 18 providers"/>
</dbReference>
<dbReference type="Ensembl" id="ENSMUST00000039959.11">
    <molecule id="Q9D8Q6-2"/>
    <property type="protein sequence ID" value="ENSMUSP00000036912.5"/>
    <property type="gene ID" value="ENSMUSG00000036027.15"/>
</dbReference>
<dbReference type="Ensembl" id="ENSMUST00000181366.3">
    <molecule id="Q9D8Q6-2"/>
    <property type="protein sequence ID" value="ENSMUSP00000137735.3"/>
    <property type="gene ID" value="ENSMUSG00000036027.15"/>
</dbReference>
<dbReference type="Ensembl" id="ENSMUST00000238450.3">
    <molecule id="Q9D8Q6-1"/>
    <property type="protein sequence ID" value="ENSMUSP00000158857.3"/>
    <property type="gene ID" value="ENSMUSG00000036027.15"/>
</dbReference>
<dbReference type="Ensembl" id="ENSMUST00000249867.1">
    <molecule id="Q9D8Q6-2"/>
    <property type="protein sequence ID" value="ENSMUSP00000159963.1"/>
    <property type="gene ID" value="ENSMUSG00000036027.15"/>
</dbReference>
<dbReference type="GeneID" id="69809"/>
<dbReference type="KEGG" id="mmu:69809"/>
<dbReference type="UCSC" id="uc009plh.2">
    <molecule id="Q9D8Q6-1"/>
    <property type="organism name" value="mouse"/>
</dbReference>
<dbReference type="AGR" id="MGI:1917059"/>
<dbReference type="CTD" id="341032"/>
<dbReference type="MGI" id="MGI:1917059">
    <property type="gene designation" value="Pou2af2"/>
</dbReference>
<dbReference type="VEuPathDB" id="HostDB:ENSMUSG00000036027"/>
<dbReference type="eggNOG" id="ENOG502RC2Q">
    <property type="taxonomic scope" value="Eukaryota"/>
</dbReference>
<dbReference type="GeneTree" id="ENSGT00390000000586"/>
<dbReference type="HOGENOM" id="CLU_086232_0_0_1"/>
<dbReference type="InParanoid" id="Q9D8Q6"/>
<dbReference type="OMA" id="QHRSSGW"/>
<dbReference type="OrthoDB" id="9892004at2759"/>
<dbReference type="PhylomeDB" id="Q9D8Q6"/>
<dbReference type="TreeFam" id="TF332345"/>
<dbReference type="BioGRID-ORCS" id="69809">
    <property type="hits" value="2 hits in 76 CRISPR screens"/>
</dbReference>
<dbReference type="PRO" id="PR:Q9D8Q6"/>
<dbReference type="Proteomes" id="UP000000589">
    <property type="component" value="Chromosome 9"/>
</dbReference>
<dbReference type="RNAct" id="Q9D8Q6">
    <property type="molecule type" value="protein"/>
</dbReference>
<dbReference type="Bgee" id="ENSMUSG00000036027">
    <property type="expression patterns" value="Expressed in small intestine Peyer's patch and 17 other cell types or tissues"/>
</dbReference>
<dbReference type="ExpressionAtlas" id="Q9D8Q6">
    <property type="expression patterns" value="baseline and differential"/>
</dbReference>
<dbReference type="GO" id="GO:0005829">
    <property type="term" value="C:cytosol"/>
    <property type="evidence" value="ECO:0007669"/>
    <property type="project" value="UniProtKB-SubCell"/>
</dbReference>
<dbReference type="GO" id="GO:0005634">
    <property type="term" value="C:nucleus"/>
    <property type="evidence" value="ECO:0000250"/>
    <property type="project" value="UniProtKB"/>
</dbReference>
<dbReference type="GO" id="GO:0070974">
    <property type="term" value="F:POU domain binding"/>
    <property type="evidence" value="ECO:0007669"/>
    <property type="project" value="InterPro"/>
</dbReference>
<dbReference type="GO" id="GO:0043565">
    <property type="term" value="F:sequence-specific DNA binding"/>
    <property type="evidence" value="ECO:0000250"/>
    <property type="project" value="UniProtKB"/>
</dbReference>
<dbReference type="GO" id="GO:0003713">
    <property type="term" value="F:transcription coactivator activity"/>
    <property type="evidence" value="ECO:0000250"/>
    <property type="project" value="UniProtKB"/>
</dbReference>
<dbReference type="InterPro" id="IPR047571">
    <property type="entry name" value="OCA"/>
</dbReference>
<dbReference type="InterPro" id="IPR037655">
    <property type="entry name" value="POU2AF2"/>
</dbReference>
<dbReference type="PANTHER" id="PTHR28376:SF1">
    <property type="entry name" value="POU DOMAIN CLASS 2-ASSOCIATING FACTOR 2"/>
    <property type="match status" value="1"/>
</dbReference>
<dbReference type="PANTHER" id="PTHR28376">
    <property type="entry name" value="RGD1562914"/>
    <property type="match status" value="1"/>
</dbReference>
<dbReference type="Pfam" id="PF17721">
    <property type="entry name" value="POU2AF2"/>
    <property type="match status" value="1"/>
</dbReference>
<dbReference type="PROSITE" id="PS52003">
    <property type="entry name" value="OCA"/>
    <property type="match status" value="1"/>
</dbReference>
<comment type="function">
    <text evidence="1 4">Transcriptional coactivator of POU2F3 (By similarity). This complex drives the development of tuft cells, a rare chemosensory cells that coordinate immune and neural functions within mucosal epithelial tissues (PubMed:35576971).</text>
</comment>
<comment type="subunit">
    <text evidence="1">Interacts with POU2F3 (via the POU domain) in a DNA-dependent manner; this interaction recruits POU2AF2 to chromatin and increases POU2F3 transactivation activity.</text>
</comment>
<comment type="subcellular location">
    <subcellularLocation>
        <location evidence="1">Cytoplasm</location>
        <location evidence="1">Cytosol</location>
    </subcellularLocation>
    <subcellularLocation>
        <location evidence="1">Nucleus</location>
    </subcellularLocation>
    <text evidence="1">Recruited to chromatin by POU2F3.</text>
</comment>
<comment type="alternative products">
    <event type="alternative initiation"/>
    <isoform>
        <id>Q9D8Q6-1</id>
        <name>1</name>
        <sequence type="displayed"/>
    </isoform>
    <isoform>
        <id>Q9D8Q6-2</id>
        <name>2</name>
        <sequence type="described" ref="VSP_061593"/>
    </isoform>
</comment>
<comment type="tissue specificity">
    <text evidence="4">Expressed in tuft cells of the small intestine, trachea, thymus, and colon.</text>
</comment>
<comment type="domain">
    <text evidence="1">In the N-terminus possesses a conserved OCA domain for bivalent binding to class II POU domain-containing transcription factors and to an octamer DNA motif (5'-ATGAAAT-3').</text>
</comment>
<comment type="disruption phenotype">
    <text evidence="4">Mutant mice generated by CRISPR-Cas9-mediated gene editing are born at normal Mendelian ratios, and have indistinguishable weight, morphology, fertility, and organ histology from normal mice. However, tuft cells in the trachea, small intestine, urethra, gall bladder, tongue, and nasal epithelium are indetectable in Pou2af2-/- mice, whereas a partial loss of tuft cells is observed in the colon.</text>
</comment>
<comment type="similarity">
    <text evidence="6">Belongs to the POU2AF family.</text>
</comment>
<keyword id="KW-0010">Activator</keyword>
<keyword id="KW-0024">Alternative initiation</keyword>
<keyword id="KW-0963">Cytoplasm</keyword>
<keyword id="KW-0539">Nucleus</keyword>
<keyword id="KW-1185">Reference proteome</keyword>
<keyword id="KW-0804">Transcription</keyword>
<keyword id="KW-0805">Transcription regulation</keyword>
<protein>
    <recommendedName>
        <fullName evidence="6">POU domain class 2-associating factor 2</fullName>
    </recommendedName>
    <alternativeName>
        <fullName evidence="5">Oct coactivator from tuft cells 1</fullName>
        <shortName evidence="5">Protein OCA-T1</shortName>
    </alternativeName>
    <alternativeName>
        <fullName evidence="5">POU class 2 homeobox-associating factor 2</fullName>
    </alternativeName>
</protein>
<accession>Q9D8Q6</accession>
<accession>A0A5K1VW51</accession>
<reference key="1">
    <citation type="journal article" date="2005" name="Science">
        <title>The transcriptional landscape of the mammalian genome.</title>
        <authorList>
            <person name="Carninci P."/>
            <person name="Kasukawa T."/>
            <person name="Katayama S."/>
            <person name="Gough J."/>
            <person name="Frith M.C."/>
            <person name="Maeda N."/>
            <person name="Oyama R."/>
            <person name="Ravasi T."/>
            <person name="Lenhard B."/>
            <person name="Wells C."/>
            <person name="Kodzius R."/>
            <person name="Shimokawa K."/>
            <person name="Bajic V.B."/>
            <person name="Brenner S.E."/>
            <person name="Batalov S."/>
            <person name="Forrest A.R."/>
            <person name="Zavolan M."/>
            <person name="Davis M.J."/>
            <person name="Wilming L.G."/>
            <person name="Aidinis V."/>
            <person name="Allen J.E."/>
            <person name="Ambesi-Impiombato A."/>
            <person name="Apweiler R."/>
            <person name="Aturaliya R.N."/>
            <person name="Bailey T.L."/>
            <person name="Bansal M."/>
            <person name="Baxter L."/>
            <person name="Beisel K.W."/>
            <person name="Bersano T."/>
            <person name="Bono H."/>
            <person name="Chalk A.M."/>
            <person name="Chiu K.P."/>
            <person name="Choudhary V."/>
            <person name="Christoffels A."/>
            <person name="Clutterbuck D.R."/>
            <person name="Crowe M.L."/>
            <person name="Dalla E."/>
            <person name="Dalrymple B.P."/>
            <person name="de Bono B."/>
            <person name="Della Gatta G."/>
            <person name="di Bernardo D."/>
            <person name="Down T."/>
            <person name="Engstrom P."/>
            <person name="Fagiolini M."/>
            <person name="Faulkner G."/>
            <person name="Fletcher C.F."/>
            <person name="Fukushima T."/>
            <person name="Furuno M."/>
            <person name="Futaki S."/>
            <person name="Gariboldi M."/>
            <person name="Georgii-Hemming P."/>
            <person name="Gingeras T.R."/>
            <person name="Gojobori T."/>
            <person name="Green R.E."/>
            <person name="Gustincich S."/>
            <person name="Harbers M."/>
            <person name="Hayashi Y."/>
            <person name="Hensch T.K."/>
            <person name="Hirokawa N."/>
            <person name="Hill D."/>
            <person name="Huminiecki L."/>
            <person name="Iacono M."/>
            <person name="Ikeo K."/>
            <person name="Iwama A."/>
            <person name="Ishikawa T."/>
            <person name="Jakt M."/>
            <person name="Kanapin A."/>
            <person name="Katoh M."/>
            <person name="Kawasawa Y."/>
            <person name="Kelso J."/>
            <person name="Kitamura H."/>
            <person name="Kitano H."/>
            <person name="Kollias G."/>
            <person name="Krishnan S.P."/>
            <person name="Kruger A."/>
            <person name="Kummerfeld S.K."/>
            <person name="Kurochkin I.V."/>
            <person name="Lareau L.F."/>
            <person name="Lazarevic D."/>
            <person name="Lipovich L."/>
            <person name="Liu J."/>
            <person name="Liuni S."/>
            <person name="McWilliam S."/>
            <person name="Madan Babu M."/>
            <person name="Madera M."/>
            <person name="Marchionni L."/>
            <person name="Matsuda H."/>
            <person name="Matsuzawa S."/>
            <person name="Miki H."/>
            <person name="Mignone F."/>
            <person name="Miyake S."/>
            <person name="Morris K."/>
            <person name="Mottagui-Tabar S."/>
            <person name="Mulder N."/>
            <person name="Nakano N."/>
            <person name="Nakauchi H."/>
            <person name="Ng P."/>
            <person name="Nilsson R."/>
            <person name="Nishiguchi S."/>
            <person name="Nishikawa S."/>
            <person name="Nori F."/>
            <person name="Ohara O."/>
            <person name="Okazaki Y."/>
            <person name="Orlando V."/>
            <person name="Pang K.C."/>
            <person name="Pavan W.J."/>
            <person name="Pavesi G."/>
            <person name="Pesole G."/>
            <person name="Petrovsky N."/>
            <person name="Piazza S."/>
            <person name="Reed J."/>
            <person name="Reid J.F."/>
            <person name="Ring B.Z."/>
            <person name="Ringwald M."/>
            <person name="Rost B."/>
            <person name="Ruan Y."/>
            <person name="Salzberg S.L."/>
            <person name="Sandelin A."/>
            <person name="Schneider C."/>
            <person name="Schoenbach C."/>
            <person name="Sekiguchi K."/>
            <person name="Semple C.A."/>
            <person name="Seno S."/>
            <person name="Sessa L."/>
            <person name="Sheng Y."/>
            <person name="Shibata Y."/>
            <person name="Shimada H."/>
            <person name="Shimada K."/>
            <person name="Silva D."/>
            <person name="Sinclair B."/>
            <person name="Sperling S."/>
            <person name="Stupka E."/>
            <person name="Sugiura K."/>
            <person name="Sultana R."/>
            <person name="Takenaka Y."/>
            <person name="Taki K."/>
            <person name="Tammoja K."/>
            <person name="Tan S.L."/>
            <person name="Tang S."/>
            <person name="Taylor M.S."/>
            <person name="Tegner J."/>
            <person name="Teichmann S.A."/>
            <person name="Ueda H.R."/>
            <person name="van Nimwegen E."/>
            <person name="Verardo R."/>
            <person name="Wei C.L."/>
            <person name="Yagi K."/>
            <person name="Yamanishi H."/>
            <person name="Zabarovsky E."/>
            <person name="Zhu S."/>
            <person name="Zimmer A."/>
            <person name="Hide W."/>
            <person name="Bult C."/>
            <person name="Grimmond S.M."/>
            <person name="Teasdale R.D."/>
            <person name="Liu E.T."/>
            <person name="Brusic V."/>
            <person name="Quackenbush J."/>
            <person name="Wahlestedt C."/>
            <person name="Mattick J.S."/>
            <person name="Hume D.A."/>
            <person name="Kai C."/>
            <person name="Sasaki D."/>
            <person name="Tomaru Y."/>
            <person name="Fukuda S."/>
            <person name="Kanamori-Katayama M."/>
            <person name="Suzuki M."/>
            <person name="Aoki J."/>
            <person name="Arakawa T."/>
            <person name="Iida J."/>
            <person name="Imamura K."/>
            <person name="Itoh M."/>
            <person name="Kato T."/>
            <person name="Kawaji H."/>
            <person name="Kawagashira N."/>
            <person name="Kawashima T."/>
            <person name="Kojima M."/>
            <person name="Kondo S."/>
            <person name="Konno H."/>
            <person name="Nakano K."/>
            <person name="Ninomiya N."/>
            <person name="Nishio T."/>
            <person name="Okada M."/>
            <person name="Plessy C."/>
            <person name="Shibata K."/>
            <person name="Shiraki T."/>
            <person name="Suzuki S."/>
            <person name="Tagami M."/>
            <person name="Waki K."/>
            <person name="Watahiki A."/>
            <person name="Okamura-Oho Y."/>
            <person name="Suzuki H."/>
            <person name="Kawai J."/>
            <person name="Hayashizaki Y."/>
        </authorList>
    </citation>
    <scope>NUCLEOTIDE SEQUENCE [LARGE SCALE MRNA] (ISOFORM 2)</scope>
    <source>
        <strain>C57BL/6J</strain>
        <tissue>Pancreas</tissue>
    </source>
</reference>
<reference key="2">
    <citation type="journal article" date="2009" name="PLoS Biol.">
        <title>Lineage-specific biology revealed by a finished genome assembly of the mouse.</title>
        <authorList>
            <person name="Church D.M."/>
            <person name="Goodstadt L."/>
            <person name="Hillier L.W."/>
            <person name="Zody M.C."/>
            <person name="Goldstein S."/>
            <person name="She X."/>
            <person name="Bult C.J."/>
            <person name="Agarwala R."/>
            <person name="Cherry J.L."/>
            <person name="DiCuccio M."/>
            <person name="Hlavina W."/>
            <person name="Kapustin Y."/>
            <person name="Meric P."/>
            <person name="Maglott D."/>
            <person name="Birtle Z."/>
            <person name="Marques A.C."/>
            <person name="Graves T."/>
            <person name="Zhou S."/>
            <person name="Teague B."/>
            <person name="Potamousis K."/>
            <person name="Churas C."/>
            <person name="Place M."/>
            <person name="Herschleb J."/>
            <person name="Runnheim R."/>
            <person name="Forrest D."/>
            <person name="Amos-Landgraf J."/>
            <person name="Schwartz D.C."/>
            <person name="Cheng Z."/>
            <person name="Lindblad-Toh K."/>
            <person name="Eichler E.E."/>
            <person name="Ponting C.P."/>
        </authorList>
    </citation>
    <scope>NUCLEOTIDE SEQUENCE [LARGE SCALE GENOMIC DNA]</scope>
    <source>
        <strain>C57BL/6J</strain>
    </source>
</reference>
<reference key="3">
    <citation type="journal article" date="2004" name="Genome Res.">
        <title>The status, quality, and expansion of the NIH full-length cDNA project: the Mammalian Gene Collection (MGC).</title>
        <authorList>
            <consortium name="The MGC Project Team"/>
        </authorList>
    </citation>
    <scope>NUCLEOTIDE SEQUENCE [LARGE SCALE MRNA] OF 42-287</scope>
    <source>
        <tissue>Brain</tissue>
    </source>
</reference>
<reference key="4">
    <citation type="journal article" date="2022" name="Nature">
        <title>OCA-T1 and OCA-T2 are coactivators of POU2F3 in the tuft cell lineage.</title>
        <authorList>
            <person name="Wu X.S."/>
            <person name="He X.Y."/>
            <person name="Ipsaro J.J."/>
            <person name="Huang Y.H."/>
            <person name="Preall J.B."/>
            <person name="Ng D."/>
            <person name="Shue Y.T."/>
            <person name="Sage J."/>
            <person name="Egeblad M."/>
            <person name="Joshua-Tor L."/>
            <person name="Vakoc C.R."/>
        </authorList>
    </citation>
    <scope>TISSUE SPECIFICITY</scope>
    <scope>DISRUPTION PHENOTYPE</scope>
    <scope>FUNCTION</scope>
</reference>
<gene>
    <name evidence="7" type="primary">Pou2af2</name>
</gene>
<proteinExistence type="evidence at transcript level"/>
<feature type="chain" id="PRO_0000263612" description="POU domain class 2-associating factor 2">
    <location>
        <begin position="1"/>
        <end position="287"/>
    </location>
</feature>
<feature type="domain" description="OCA" evidence="2">
    <location>
        <begin position="10"/>
        <end position="32"/>
    </location>
</feature>
<feature type="region of interest" description="Disordered" evidence="3">
    <location>
        <begin position="24"/>
        <end position="51"/>
    </location>
</feature>
<feature type="region of interest" description="Disordered" evidence="3">
    <location>
        <begin position="161"/>
        <end position="199"/>
    </location>
</feature>
<feature type="region of interest" description="Disordered" evidence="3">
    <location>
        <begin position="247"/>
        <end position="279"/>
    </location>
</feature>
<feature type="compositionally biased region" description="Polar residues" evidence="3">
    <location>
        <begin position="33"/>
        <end position="49"/>
    </location>
</feature>
<feature type="compositionally biased region" description="Polar residues" evidence="3">
    <location>
        <begin position="180"/>
        <end position="199"/>
    </location>
</feature>
<feature type="splice variant" id="VSP_061593" description="In isoform 2.">
    <location>
        <begin position="1"/>
        <end position="52"/>
    </location>
</feature>
<organism>
    <name type="scientific">Mus musculus</name>
    <name type="common">Mouse</name>
    <dbReference type="NCBI Taxonomy" id="10090"/>
    <lineage>
        <taxon>Eukaryota</taxon>
        <taxon>Metazoa</taxon>
        <taxon>Chordata</taxon>
        <taxon>Craniata</taxon>
        <taxon>Vertebrata</taxon>
        <taxon>Euteleostomi</taxon>
        <taxon>Mammalia</taxon>
        <taxon>Eutheria</taxon>
        <taxon>Euarchontoglires</taxon>
        <taxon>Glires</taxon>
        <taxon>Rodentia</taxon>
        <taxon>Myomorpha</taxon>
        <taxon>Muroidea</taxon>
        <taxon>Muridae</taxon>
        <taxon>Murinae</taxon>
        <taxon>Mus</taxon>
        <taxon>Mus</taxon>
    </lineage>
</organism>
<name>OCAT1_MOUSE</name>
<sequence length="287" mass="31376">MDSVPRDYSKRVYQGVRVKHTVKDLLAEKRSRQTSNTRLNGSVSSSQPPFIQMPGSPVMSGYYGVRRSFLSDSDFHSSKQFSNDLYTSGMSKPFACESTAGQSHTGLLESYLAEPYGDYRPPALTPTPSSLFSTSTLPPLLPPPFPSDPTHFVFRDSWEQTVPDGLSQPDPMPADALQSLPPSTSCLSQLESGSSTQHRNMGWGASLAGAQSYSLHALEDLHHTPGYPTSPPYPFTSFMTVSNDLPPKVGPLSPEEGSDVSSLHDPSPWTKEDGSMAWGSYECRRAY</sequence>